<name>CAPSD_TMVKO</name>
<keyword id="KW-0007">Acetylation</keyword>
<keyword id="KW-0167">Capsid protein</keyword>
<keyword id="KW-0903">Direct protein sequencing</keyword>
<keyword id="KW-1139">Helical capsid protein</keyword>
<keyword id="KW-0946">Virion</keyword>
<protein>
    <recommendedName>
        <fullName>Capsid protein</fullName>
    </recommendedName>
    <alternativeName>
        <fullName>Coat protein</fullName>
    </alternativeName>
</protein>
<organismHost>
    <name type="scientific">Nicotiana tabacum</name>
    <name type="common">Common tobacco</name>
    <dbReference type="NCBI Taxonomy" id="4097"/>
</organismHost>
<reference key="1">
    <citation type="journal article" date="1970" name="J. Biochem.">
        <title>Amino acid sequences of some common Japanese strains of tobacco mosaic virus.</title>
        <authorList>
            <person name="Nozu Y."/>
            <person name="Ohno T."/>
            <person name="Okada Y."/>
        </authorList>
    </citation>
    <scope>PROTEIN SEQUENCE OF 2-159</scope>
    <scope>ACETYLATION AT SER-2</scope>
</reference>
<accession>P69508</accession>
<accession>P03572</accession>
<evidence type="ECO:0000269" key="1">
    <source>
    </source>
</evidence>
<evidence type="ECO:0000305" key="2"/>
<organism>
    <name type="scientific">Tobacco mosaic virus (strain Kokubu)</name>
    <name type="common">TMV</name>
    <dbReference type="NCBI Taxonomy" id="12249"/>
    <lineage>
        <taxon>Viruses</taxon>
        <taxon>Riboviria</taxon>
        <taxon>Orthornavirae</taxon>
        <taxon>Kitrinoviricota</taxon>
        <taxon>Alsuviricetes</taxon>
        <taxon>Martellivirales</taxon>
        <taxon>Virgaviridae</taxon>
        <taxon>Tobamovirus</taxon>
        <taxon>Tobacco mosaic virus</taxon>
    </lineage>
</organism>
<gene>
    <name type="primary">CP</name>
</gene>
<feature type="initiator methionine" description="Removed; by host" evidence="1">
    <location>
        <position position="1"/>
    </location>
</feature>
<feature type="chain" id="PRO_0000144924" description="Capsid protein">
    <location>
        <begin position="2"/>
        <end position="159"/>
    </location>
</feature>
<feature type="modified residue" description="N-acetylserine; by host" evidence="1">
    <location>
        <position position="2"/>
    </location>
</feature>
<proteinExistence type="evidence at protein level"/>
<dbReference type="PIR" id="C91925">
    <property type="entry name" value="VCTMKO"/>
</dbReference>
<dbReference type="SMR" id="P69508"/>
<dbReference type="iPTMnet" id="P69508"/>
<dbReference type="GO" id="GO:0019029">
    <property type="term" value="C:helical viral capsid"/>
    <property type="evidence" value="ECO:0007669"/>
    <property type="project" value="UniProtKB-KW"/>
</dbReference>
<dbReference type="GO" id="GO:0005198">
    <property type="term" value="F:structural molecule activity"/>
    <property type="evidence" value="ECO:0007669"/>
    <property type="project" value="InterPro"/>
</dbReference>
<dbReference type="Gene3D" id="1.20.120.70">
    <property type="entry name" value="Tobacco mosaic virus-like, coat protein"/>
    <property type="match status" value="1"/>
</dbReference>
<dbReference type="InterPro" id="IPR001337">
    <property type="entry name" value="TMV-like_coat"/>
</dbReference>
<dbReference type="InterPro" id="IPR036417">
    <property type="entry name" value="TMV-like_coat_sf"/>
</dbReference>
<dbReference type="Pfam" id="PF00721">
    <property type="entry name" value="TMV_coat"/>
    <property type="match status" value="1"/>
</dbReference>
<dbReference type="SUPFAM" id="SSF47195">
    <property type="entry name" value="TMV-like viral coat proteins"/>
    <property type="match status" value="1"/>
</dbReference>
<sequence length="159" mass="17610">MSYSITTPSQFVFLSSAWADPIELINLCTNALGNQFQTQQARTVVQRQFSEVWKPSPQVTVRFPDSDFKVYRYNAVLDPLVTALLGAFDTRNRIIEVENQANPTTAETLDATRRVDDATVAIRSAINNLVVELIRGTGSYNRSSFESSSGLVWTSGPAT</sequence>
<comment type="function">
    <text>Capsid protein self-assembles to form rod-shaped virions about 18 nm in diameter with a central canal enclosing the viral genomic RNA.</text>
</comment>
<comment type="subcellular location">
    <subcellularLocation>
        <location evidence="2">Virion</location>
    </subcellularLocation>
</comment>
<comment type="similarity">
    <text evidence="2">Belongs to the virgaviridae capsid protein family.</text>
</comment>